<keyword id="KW-0489">Methyltransferase</keyword>
<keyword id="KW-1185">Reference proteome</keyword>
<keyword id="KW-0690">Ribosome biogenesis</keyword>
<keyword id="KW-0694">RNA-binding</keyword>
<keyword id="KW-0698">rRNA processing</keyword>
<keyword id="KW-0699">rRNA-binding</keyword>
<keyword id="KW-0949">S-adenosyl-L-methionine</keyword>
<keyword id="KW-0808">Transferase</keyword>
<dbReference type="EC" id="2.1.1.-" evidence="1"/>
<dbReference type="EMBL" id="BA000002">
    <property type="protein sequence ID" value="BAA79467.1"/>
    <property type="molecule type" value="Genomic_DNA"/>
</dbReference>
<dbReference type="PIR" id="G72746">
    <property type="entry name" value="G72746"/>
</dbReference>
<dbReference type="SMR" id="Q9YES9"/>
<dbReference type="STRING" id="272557.APE_0502"/>
<dbReference type="EnsemblBacteria" id="BAA79467">
    <property type="protein sequence ID" value="BAA79467"/>
    <property type="gene ID" value="APE_0502"/>
</dbReference>
<dbReference type="KEGG" id="ape:APE_0502"/>
<dbReference type="PATRIC" id="fig|272557.25.peg.379"/>
<dbReference type="eggNOG" id="arCOG04122">
    <property type="taxonomic scope" value="Archaea"/>
</dbReference>
<dbReference type="Proteomes" id="UP000002518">
    <property type="component" value="Chromosome"/>
</dbReference>
<dbReference type="GO" id="GO:0070037">
    <property type="term" value="F:rRNA (pseudouridine) methyltransferase activity"/>
    <property type="evidence" value="ECO:0007669"/>
    <property type="project" value="UniProtKB-UniRule"/>
</dbReference>
<dbReference type="GO" id="GO:0019843">
    <property type="term" value="F:rRNA binding"/>
    <property type="evidence" value="ECO:0007669"/>
    <property type="project" value="UniProtKB-UniRule"/>
</dbReference>
<dbReference type="GO" id="GO:0070475">
    <property type="term" value="P:rRNA base methylation"/>
    <property type="evidence" value="ECO:0007669"/>
    <property type="project" value="InterPro"/>
</dbReference>
<dbReference type="CDD" id="cd18088">
    <property type="entry name" value="Nep1-like"/>
    <property type="match status" value="1"/>
</dbReference>
<dbReference type="Gene3D" id="3.40.1280.10">
    <property type="match status" value="1"/>
</dbReference>
<dbReference type="HAMAP" id="MF_00554">
    <property type="entry name" value="NEP1"/>
    <property type="match status" value="1"/>
</dbReference>
<dbReference type="InterPro" id="IPR029028">
    <property type="entry name" value="Alpha/beta_knot_MTases"/>
</dbReference>
<dbReference type="InterPro" id="IPR005304">
    <property type="entry name" value="Rbsml_bgen_MeTrfase_EMG1/NEP1"/>
</dbReference>
<dbReference type="InterPro" id="IPR023503">
    <property type="entry name" value="Ribosome_NEP1_arc"/>
</dbReference>
<dbReference type="InterPro" id="IPR029026">
    <property type="entry name" value="tRNA_m1G_MTases_N"/>
</dbReference>
<dbReference type="NCBIfam" id="NF003208">
    <property type="entry name" value="PRK04171.2-3"/>
    <property type="match status" value="1"/>
</dbReference>
<dbReference type="PANTHER" id="PTHR12636">
    <property type="entry name" value="NEP1/MRA1"/>
    <property type="match status" value="1"/>
</dbReference>
<dbReference type="PANTHER" id="PTHR12636:SF5">
    <property type="entry name" value="RIBOSOMAL RNA SMALL SUBUNIT METHYLTRANSFERASE NEP1"/>
    <property type="match status" value="1"/>
</dbReference>
<dbReference type="Pfam" id="PF03587">
    <property type="entry name" value="EMG1"/>
    <property type="match status" value="1"/>
</dbReference>
<dbReference type="SUPFAM" id="SSF75217">
    <property type="entry name" value="alpha/beta knot"/>
    <property type="match status" value="1"/>
</dbReference>
<protein>
    <recommendedName>
        <fullName evidence="1">Ribosomal RNA small subunit methyltransferase Nep1</fullName>
        <ecNumber evidence="1">2.1.1.-</ecNumber>
    </recommendedName>
    <alternativeName>
        <fullName evidence="1">16S rRNA (pseudouridine-N1-)-methyltransferase Nep1</fullName>
    </alternativeName>
</protein>
<reference key="1">
    <citation type="journal article" date="1999" name="DNA Res.">
        <title>Complete genome sequence of an aerobic hyper-thermophilic crenarchaeon, Aeropyrum pernix K1.</title>
        <authorList>
            <person name="Kawarabayasi Y."/>
            <person name="Hino Y."/>
            <person name="Horikawa H."/>
            <person name="Yamazaki S."/>
            <person name="Haikawa Y."/>
            <person name="Jin-no K."/>
            <person name="Takahashi M."/>
            <person name="Sekine M."/>
            <person name="Baba S."/>
            <person name="Ankai A."/>
            <person name="Kosugi H."/>
            <person name="Hosoyama A."/>
            <person name="Fukui S."/>
            <person name="Nagai Y."/>
            <person name="Nishijima K."/>
            <person name="Nakazawa H."/>
            <person name="Takamiya M."/>
            <person name="Masuda S."/>
            <person name="Funahashi T."/>
            <person name="Tanaka T."/>
            <person name="Kudoh Y."/>
            <person name="Yamazaki J."/>
            <person name="Kushida N."/>
            <person name="Oguchi A."/>
            <person name="Aoki K."/>
            <person name="Kubota K."/>
            <person name="Nakamura Y."/>
            <person name="Nomura N."/>
            <person name="Sako Y."/>
            <person name="Kikuchi H."/>
        </authorList>
    </citation>
    <scope>NUCLEOTIDE SEQUENCE [LARGE SCALE GENOMIC DNA]</scope>
    <source>
        <strain>ATCC 700893 / DSM 11879 / JCM 9820 / NBRC 100138 / K1</strain>
    </source>
</reference>
<gene>
    <name type="primary">nep1</name>
    <name type="ordered locus">APE_0502</name>
</gene>
<name>NEP1_AERPE</name>
<accession>Q9YES9</accession>
<evidence type="ECO:0000255" key="1">
    <source>
        <dbReference type="HAMAP-Rule" id="MF_00554"/>
    </source>
</evidence>
<evidence type="ECO:0000305" key="2"/>
<organism>
    <name type="scientific">Aeropyrum pernix (strain ATCC 700893 / DSM 11879 / JCM 9820 / NBRC 100138 / K1)</name>
    <dbReference type="NCBI Taxonomy" id="272557"/>
    <lineage>
        <taxon>Archaea</taxon>
        <taxon>Thermoproteota</taxon>
        <taxon>Thermoprotei</taxon>
        <taxon>Desulfurococcales</taxon>
        <taxon>Desulfurococcaceae</taxon>
        <taxon>Aeropyrum</taxon>
    </lineage>
</organism>
<feature type="chain" id="PRO_0000158614" description="Ribosomal RNA small subunit methyltransferase Nep1">
    <location>
        <begin position="1"/>
        <end position="224"/>
    </location>
</feature>
<feature type="binding site" evidence="1">
    <location>
        <position position="176"/>
    </location>
    <ligand>
        <name>S-adenosyl-L-methionine</name>
        <dbReference type="ChEBI" id="CHEBI:59789"/>
    </ligand>
</feature>
<feature type="binding site" evidence="1">
    <location>
        <position position="181"/>
    </location>
    <ligand>
        <name>S-adenosyl-L-methionine</name>
        <dbReference type="ChEBI" id="CHEBI:59789"/>
    </ligand>
</feature>
<feature type="binding site" evidence="1">
    <location>
        <begin position="198"/>
        <end position="203"/>
    </location>
    <ligand>
        <name>S-adenosyl-L-methionine</name>
        <dbReference type="ChEBI" id="CHEBI:59789"/>
    </ligand>
</feature>
<feature type="site" description="Interaction with substrate rRNA" evidence="1">
    <location>
        <position position="59"/>
    </location>
</feature>
<feature type="site" description="Stabilizes Arg-59" evidence="1">
    <location>
        <position position="61"/>
    </location>
</feature>
<feature type="site" description="Interaction with substrate rRNA" evidence="1">
    <location>
        <position position="100"/>
    </location>
</feature>
<feature type="site" description="Interaction with substrate rRNA" evidence="1">
    <location>
        <position position="103"/>
    </location>
</feature>
<feature type="site" description="Interaction with substrate rRNA" evidence="1">
    <location>
        <position position="107"/>
    </location>
</feature>
<proteinExistence type="inferred from homology"/>
<sequence>MKIVFLECSVELVPRSLWSHPQVLKSARRYGIEPGDLLLDKSLHYNAMAELPAKWKRGRPDILHVALLTTTDSPLYNEGLLRIYFQVYDGRLFEVGTGVRVPKNYERFRGLVAQLLKTERVPPGEGEALIRLHSRSLAEFVEREGRFILMWEKGSPTTTTYVAARALSTGLPIGVGCFPRGEFKRSTLRKASEAYSIMGGAPLKTWGVASRIVYALERLKSPFT</sequence>
<comment type="function">
    <text evidence="1">Methyltransferase involved in ribosomal biogenesis. Specifically catalyzes the N1-methylation of the pseudouridine corresponding to position 914 in M.jannaschii 16S rRNA.</text>
</comment>
<comment type="catalytic activity">
    <reaction evidence="1">
        <text>a pseudouridine in rRNA + S-adenosyl-L-methionine = an N(1)-methylpseudouridine in rRNA + S-adenosyl-L-homocysteine + H(+)</text>
        <dbReference type="Rhea" id="RHEA:46696"/>
        <dbReference type="Rhea" id="RHEA-COMP:11634"/>
        <dbReference type="Rhea" id="RHEA-COMP:13933"/>
        <dbReference type="ChEBI" id="CHEBI:15378"/>
        <dbReference type="ChEBI" id="CHEBI:57856"/>
        <dbReference type="ChEBI" id="CHEBI:59789"/>
        <dbReference type="ChEBI" id="CHEBI:65314"/>
        <dbReference type="ChEBI" id="CHEBI:74890"/>
    </reaction>
</comment>
<comment type="subunit">
    <text evidence="1">Homodimer.</text>
</comment>
<comment type="similarity">
    <text evidence="2">Belongs to the class IV-like SAM-binding methyltransferase superfamily. RNA methyltransferase NEP1 family.</text>
</comment>